<accession>B8EC04</accession>
<reference key="1">
    <citation type="submission" date="2008-12" db="EMBL/GenBank/DDBJ databases">
        <title>Complete sequence of chromosome of Shewanella baltica OS223.</title>
        <authorList>
            <consortium name="US DOE Joint Genome Institute"/>
            <person name="Lucas S."/>
            <person name="Copeland A."/>
            <person name="Lapidus A."/>
            <person name="Glavina del Rio T."/>
            <person name="Dalin E."/>
            <person name="Tice H."/>
            <person name="Bruce D."/>
            <person name="Goodwin L."/>
            <person name="Pitluck S."/>
            <person name="Chertkov O."/>
            <person name="Meincke L."/>
            <person name="Brettin T."/>
            <person name="Detter J.C."/>
            <person name="Han C."/>
            <person name="Kuske C.R."/>
            <person name="Larimer F."/>
            <person name="Land M."/>
            <person name="Hauser L."/>
            <person name="Kyrpides N."/>
            <person name="Ovchinnikova G."/>
            <person name="Brettar I."/>
            <person name="Rodrigues J."/>
            <person name="Konstantinidis K."/>
            <person name="Tiedje J."/>
        </authorList>
    </citation>
    <scope>NUCLEOTIDE SEQUENCE [LARGE SCALE GENOMIC DNA]</scope>
    <source>
        <strain>OS223</strain>
    </source>
</reference>
<feature type="chain" id="PRO_0000386239" description="GTPase Obg">
    <location>
        <begin position="1"/>
        <end position="389"/>
    </location>
</feature>
<feature type="domain" description="Obg" evidence="2">
    <location>
        <begin position="1"/>
        <end position="159"/>
    </location>
</feature>
<feature type="domain" description="OBG-type G" evidence="1">
    <location>
        <begin position="160"/>
        <end position="333"/>
    </location>
</feature>
<feature type="binding site" evidence="1">
    <location>
        <begin position="166"/>
        <end position="173"/>
    </location>
    <ligand>
        <name>GTP</name>
        <dbReference type="ChEBI" id="CHEBI:37565"/>
    </ligand>
</feature>
<feature type="binding site" evidence="1">
    <location>
        <position position="173"/>
    </location>
    <ligand>
        <name>Mg(2+)</name>
        <dbReference type="ChEBI" id="CHEBI:18420"/>
    </ligand>
</feature>
<feature type="binding site" evidence="1">
    <location>
        <begin position="191"/>
        <end position="195"/>
    </location>
    <ligand>
        <name>GTP</name>
        <dbReference type="ChEBI" id="CHEBI:37565"/>
    </ligand>
</feature>
<feature type="binding site" evidence="1">
    <location>
        <position position="193"/>
    </location>
    <ligand>
        <name>Mg(2+)</name>
        <dbReference type="ChEBI" id="CHEBI:18420"/>
    </ligand>
</feature>
<feature type="binding site" evidence="1">
    <location>
        <begin position="213"/>
        <end position="216"/>
    </location>
    <ligand>
        <name>GTP</name>
        <dbReference type="ChEBI" id="CHEBI:37565"/>
    </ligand>
</feature>
<feature type="binding site" evidence="1">
    <location>
        <begin position="283"/>
        <end position="286"/>
    </location>
    <ligand>
        <name>GTP</name>
        <dbReference type="ChEBI" id="CHEBI:37565"/>
    </ligand>
</feature>
<feature type="binding site" evidence="1">
    <location>
        <begin position="314"/>
        <end position="316"/>
    </location>
    <ligand>
        <name>GTP</name>
        <dbReference type="ChEBI" id="CHEBI:37565"/>
    </ligand>
</feature>
<name>OBG_SHEB2</name>
<keyword id="KW-0963">Cytoplasm</keyword>
<keyword id="KW-0342">GTP-binding</keyword>
<keyword id="KW-0378">Hydrolase</keyword>
<keyword id="KW-0460">Magnesium</keyword>
<keyword id="KW-0479">Metal-binding</keyword>
<keyword id="KW-0547">Nucleotide-binding</keyword>
<organism>
    <name type="scientific">Shewanella baltica (strain OS223)</name>
    <dbReference type="NCBI Taxonomy" id="407976"/>
    <lineage>
        <taxon>Bacteria</taxon>
        <taxon>Pseudomonadati</taxon>
        <taxon>Pseudomonadota</taxon>
        <taxon>Gammaproteobacteria</taxon>
        <taxon>Alteromonadales</taxon>
        <taxon>Shewanellaceae</taxon>
        <taxon>Shewanella</taxon>
    </lineage>
</organism>
<protein>
    <recommendedName>
        <fullName evidence="1">GTPase Obg</fullName>
        <ecNumber evidence="1">3.6.5.-</ecNumber>
    </recommendedName>
    <alternativeName>
        <fullName evidence="1">GTP-binding protein Obg</fullName>
    </alternativeName>
</protein>
<proteinExistence type="inferred from homology"/>
<gene>
    <name evidence="1" type="primary">obg</name>
    <name type="ordered locus">Sbal223_3321</name>
</gene>
<dbReference type="EC" id="3.6.5.-" evidence="1"/>
<dbReference type="EMBL" id="CP001252">
    <property type="protein sequence ID" value="ACK47805.1"/>
    <property type="molecule type" value="Genomic_DNA"/>
</dbReference>
<dbReference type="SMR" id="B8EC04"/>
<dbReference type="KEGG" id="sbp:Sbal223_3321"/>
<dbReference type="HOGENOM" id="CLU_011747_2_0_6"/>
<dbReference type="Proteomes" id="UP000002507">
    <property type="component" value="Chromosome"/>
</dbReference>
<dbReference type="GO" id="GO:0005737">
    <property type="term" value="C:cytoplasm"/>
    <property type="evidence" value="ECO:0007669"/>
    <property type="project" value="UniProtKB-SubCell"/>
</dbReference>
<dbReference type="GO" id="GO:0005525">
    <property type="term" value="F:GTP binding"/>
    <property type="evidence" value="ECO:0007669"/>
    <property type="project" value="UniProtKB-UniRule"/>
</dbReference>
<dbReference type="GO" id="GO:0003924">
    <property type="term" value="F:GTPase activity"/>
    <property type="evidence" value="ECO:0007669"/>
    <property type="project" value="UniProtKB-UniRule"/>
</dbReference>
<dbReference type="GO" id="GO:0000287">
    <property type="term" value="F:magnesium ion binding"/>
    <property type="evidence" value="ECO:0007669"/>
    <property type="project" value="InterPro"/>
</dbReference>
<dbReference type="GO" id="GO:0042254">
    <property type="term" value="P:ribosome biogenesis"/>
    <property type="evidence" value="ECO:0007669"/>
    <property type="project" value="UniProtKB-UniRule"/>
</dbReference>
<dbReference type="CDD" id="cd01898">
    <property type="entry name" value="Obg"/>
    <property type="match status" value="1"/>
</dbReference>
<dbReference type="FunFam" id="2.70.210.12:FF:000001">
    <property type="entry name" value="GTPase Obg"/>
    <property type="match status" value="1"/>
</dbReference>
<dbReference type="Gene3D" id="2.70.210.12">
    <property type="entry name" value="GTP1/OBG domain"/>
    <property type="match status" value="1"/>
</dbReference>
<dbReference type="Gene3D" id="3.40.50.300">
    <property type="entry name" value="P-loop containing nucleotide triphosphate hydrolases"/>
    <property type="match status" value="1"/>
</dbReference>
<dbReference type="HAMAP" id="MF_01454">
    <property type="entry name" value="GTPase_Obg"/>
    <property type="match status" value="1"/>
</dbReference>
<dbReference type="InterPro" id="IPR031167">
    <property type="entry name" value="G_OBG"/>
</dbReference>
<dbReference type="InterPro" id="IPR006073">
    <property type="entry name" value="GTP-bd"/>
</dbReference>
<dbReference type="InterPro" id="IPR014100">
    <property type="entry name" value="GTP-bd_Obg/CgtA"/>
</dbReference>
<dbReference type="InterPro" id="IPR006074">
    <property type="entry name" value="GTP1-OBG_CS"/>
</dbReference>
<dbReference type="InterPro" id="IPR006169">
    <property type="entry name" value="GTP1_OBG_dom"/>
</dbReference>
<dbReference type="InterPro" id="IPR036726">
    <property type="entry name" value="GTP1_OBG_dom_sf"/>
</dbReference>
<dbReference type="InterPro" id="IPR045086">
    <property type="entry name" value="OBG_GTPase"/>
</dbReference>
<dbReference type="InterPro" id="IPR027417">
    <property type="entry name" value="P-loop_NTPase"/>
</dbReference>
<dbReference type="NCBIfam" id="TIGR02729">
    <property type="entry name" value="Obg_CgtA"/>
    <property type="match status" value="1"/>
</dbReference>
<dbReference type="NCBIfam" id="NF008955">
    <property type="entry name" value="PRK12297.1"/>
    <property type="match status" value="1"/>
</dbReference>
<dbReference type="NCBIfam" id="NF008956">
    <property type="entry name" value="PRK12299.1"/>
    <property type="match status" value="1"/>
</dbReference>
<dbReference type="PANTHER" id="PTHR11702">
    <property type="entry name" value="DEVELOPMENTALLY REGULATED GTP-BINDING PROTEIN-RELATED"/>
    <property type="match status" value="1"/>
</dbReference>
<dbReference type="PANTHER" id="PTHR11702:SF31">
    <property type="entry name" value="MITOCHONDRIAL RIBOSOME-ASSOCIATED GTPASE 2"/>
    <property type="match status" value="1"/>
</dbReference>
<dbReference type="Pfam" id="PF01018">
    <property type="entry name" value="GTP1_OBG"/>
    <property type="match status" value="1"/>
</dbReference>
<dbReference type="Pfam" id="PF01926">
    <property type="entry name" value="MMR_HSR1"/>
    <property type="match status" value="1"/>
</dbReference>
<dbReference type="PIRSF" id="PIRSF002401">
    <property type="entry name" value="GTP_bd_Obg/CgtA"/>
    <property type="match status" value="1"/>
</dbReference>
<dbReference type="PRINTS" id="PR00326">
    <property type="entry name" value="GTP1OBG"/>
</dbReference>
<dbReference type="SUPFAM" id="SSF82051">
    <property type="entry name" value="Obg GTP-binding protein N-terminal domain"/>
    <property type="match status" value="1"/>
</dbReference>
<dbReference type="SUPFAM" id="SSF52540">
    <property type="entry name" value="P-loop containing nucleoside triphosphate hydrolases"/>
    <property type="match status" value="1"/>
</dbReference>
<dbReference type="PROSITE" id="PS51710">
    <property type="entry name" value="G_OBG"/>
    <property type="match status" value="1"/>
</dbReference>
<dbReference type="PROSITE" id="PS00905">
    <property type="entry name" value="GTP1_OBG"/>
    <property type="match status" value="1"/>
</dbReference>
<dbReference type="PROSITE" id="PS51883">
    <property type="entry name" value="OBG"/>
    <property type="match status" value="1"/>
</dbReference>
<sequence length="389" mass="42921">MKFVDEAVIRVEAGDGGSGCVSFRREKYVPDGGPDGGDGGDGGSVFLQADENFNTLIEFRFERFHMAERGENGRGRDCTGHSGKDLILKVPVGTRAVDHDTEEVLGDLTTHGQKLLVAKGGFHGLGNTRFKSSTNRAPRQKTLGTPGEVRSLKLELLLLADVGLLGMPNAGKSTFIRAVSRATPKVADYPFTTLVPNLGVVNPRPGQSFVIADIPGLIEGAADGAGLGIRFLKHLERCRILLHIIDIEPIDGTDPVESARAIVGELEKYSPKLASKPRWLVFNKTDLLLEEELQQKVDRIVKEMGWEGDVYTISAYNRDGTNELALKLLDYIASLPPEDNEIDPDSEVEFKWDNYHQANLDSVNEDYVDEDDDDDFDDDDYDVEVIYQR</sequence>
<comment type="function">
    <text evidence="1">An essential GTPase which binds GTP, GDP and possibly (p)ppGpp with moderate affinity, with high nucleotide exchange rates and a fairly low GTP hydrolysis rate. Plays a role in control of the cell cycle, stress response, ribosome biogenesis and in those bacteria that undergo differentiation, in morphogenesis control.</text>
</comment>
<comment type="cofactor">
    <cofactor evidence="1">
        <name>Mg(2+)</name>
        <dbReference type="ChEBI" id="CHEBI:18420"/>
    </cofactor>
</comment>
<comment type="subunit">
    <text evidence="1">Monomer.</text>
</comment>
<comment type="subcellular location">
    <subcellularLocation>
        <location evidence="1">Cytoplasm</location>
    </subcellularLocation>
</comment>
<comment type="similarity">
    <text evidence="1">Belongs to the TRAFAC class OBG-HflX-like GTPase superfamily. OBG GTPase family.</text>
</comment>
<evidence type="ECO:0000255" key="1">
    <source>
        <dbReference type="HAMAP-Rule" id="MF_01454"/>
    </source>
</evidence>
<evidence type="ECO:0000255" key="2">
    <source>
        <dbReference type="PROSITE-ProRule" id="PRU01231"/>
    </source>
</evidence>